<protein>
    <recommendedName>
        <fullName evidence="1">NAD kinase</fullName>
        <ecNumber evidence="1">2.7.1.23</ecNumber>
    </recommendedName>
    <alternativeName>
        <fullName evidence="1">ATP-dependent NAD kinase</fullName>
    </alternativeName>
</protein>
<organism>
    <name type="scientific">Hyphomonas neptunium (strain ATCC 15444)</name>
    <dbReference type="NCBI Taxonomy" id="228405"/>
    <lineage>
        <taxon>Bacteria</taxon>
        <taxon>Pseudomonadati</taxon>
        <taxon>Pseudomonadota</taxon>
        <taxon>Alphaproteobacteria</taxon>
        <taxon>Hyphomonadales</taxon>
        <taxon>Hyphomonadaceae</taxon>
        <taxon>Hyphomonas</taxon>
    </lineage>
</organism>
<feature type="chain" id="PRO_1000005416" description="NAD kinase">
    <location>
        <begin position="1"/>
        <end position="255"/>
    </location>
</feature>
<feature type="active site" description="Proton acceptor" evidence="1">
    <location>
        <position position="44"/>
    </location>
</feature>
<feature type="binding site" evidence="1">
    <location>
        <begin position="44"/>
        <end position="45"/>
    </location>
    <ligand>
        <name>NAD(+)</name>
        <dbReference type="ChEBI" id="CHEBI:57540"/>
    </ligand>
</feature>
<feature type="binding site" evidence="1">
    <location>
        <begin position="114"/>
        <end position="115"/>
    </location>
    <ligand>
        <name>NAD(+)</name>
        <dbReference type="ChEBI" id="CHEBI:57540"/>
    </ligand>
</feature>
<feature type="binding site" evidence="1">
    <location>
        <position position="144"/>
    </location>
    <ligand>
        <name>NAD(+)</name>
        <dbReference type="ChEBI" id="CHEBI:57540"/>
    </ligand>
</feature>
<feature type="binding site" evidence="1">
    <location>
        <position position="152"/>
    </location>
    <ligand>
        <name>NAD(+)</name>
        <dbReference type="ChEBI" id="CHEBI:57540"/>
    </ligand>
</feature>
<feature type="binding site" evidence="1">
    <location>
        <begin position="155"/>
        <end position="160"/>
    </location>
    <ligand>
        <name>NAD(+)</name>
        <dbReference type="ChEBI" id="CHEBI:57540"/>
    </ligand>
</feature>
<reference key="1">
    <citation type="journal article" date="2006" name="J. Bacteriol.">
        <title>Comparative genomic evidence for a close relationship between the dimorphic prosthecate bacteria Hyphomonas neptunium and Caulobacter crescentus.</title>
        <authorList>
            <person name="Badger J.H."/>
            <person name="Hoover T.R."/>
            <person name="Brun Y.V."/>
            <person name="Weiner R.M."/>
            <person name="Laub M.T."/>
            <person name="Alexandre G."/>
            <person name="Mrazek J."/>
            <person name="Ren Q."/>
            <person name="Paulsen I.T."/>
            <person name="Nelson K.E."/>
            <person name="Khouri H.M."/>
            <person name="Radune D."/>
            <person name="Sosa J."/>
            <person name="Dodson R.J."/>
            <person name="Sullivan S.A."/>
            <person name="Rosovitz M.J."/>
            <person name="Madupu R."/>
            <person name="Brinkac L.M."/>
            <person name="Durkin A.S."/>
            <person name="Daugherty S.C."/>
            <person name="Kothari S.P."/>
            <person name="Giglio M.G."/>
            <person name="Zhou L."/>
            <person name="Haft D.H."/>
            <person name="Selengut J.D."/>
            <person name="Davidsen T.M."/>
            <person name="Yang Q."/>
            <person name="Zafar N."/>
            <person name="Ward N.L."/>
        </authorList>
    </citation>
    <scope>NUCLEOTIDE SEQUENCE [LARGE SCALE GENOMIC DNA]</scope>
    <source>
        <strain>ATCC 15444</strain>
    </source>
</reference>
<keyword id="KW-0067">ATP-binding</keyword>
<keyword id="KW-0963">Cytoplasm</keyword>
<keyword id="KW-0418">Kinase</keyword>
<keyword id="KW-0520">NAD</keyword>
<keyword id="KW-0521">NADP</keyword>
<keyword id="KW-0547">Nucleotide-binding</keyword>
<keyword id="KW-1185">Reference proteome</keyword>
<keyword id="KW-0808">Transferase</keyword>
<comment type="function">
    <text evidence="1">Involved in the regulation of the intracellular balance of NAD and NADP, and is a key enzyme in the biosynthesis of NADP. Catalyzes specifically the phosphorylation on 2'-hydroxyl of the adenosine moiety of NAD to yield NADP.</text>
</comment>
<comment type="catalytic activity">
    <reaction evidence="1">
        <text>NAD(+) + ATP = ADP + NADP(+) + H(+)</text>
        <dbReference type="Rhea" id="RHEA:18629"/>
        <dbReference type="ChEBI" id="CHEBI:15378"/>
        <dbReference type="ChEBI" id="CHEBI:30616"/>
        <dbReference type="ChEBI" id="CHEBI:57540"/>
        <dbReference type="ChEBI" id="CHEBI:58349"/>
        <dbReference type="ChEBI" id="CHEBI:456216"/>
        <dbReference type="EC" id="2.7.1.23"/>
    </reaction>
</comment>
<comment type="cofactor">
    <cofactor evidence="1">
        <name>a divalent metal cation</name>
        <dbReference type="ChEBI" id="CHEBI:60240"/>
    </cofactor>
</comment>
<comment type="subcellular location">
    <subcellularLocation>
        <location evidence="1">Cytoplasm</location>
    </subcellularLocation>
</comment>
<comment type="similarity">
    <text evidence="1">Belongs to the NAD kinase family.</text>
</comment>
<proteinExistence type="inferred from homology"/>
<name>NADK_HYPNA</name>
<evidence type="ECO:0000255" key="1">
    <source>
        <dbReference type="HAMAP-Rule" id="MF_00361"/>
    </source>
</evidence>
<dbReference type="EC" id="2.7.1.23" evidence="1"/>
<dbReference type="EMBL" id="CP000158">
    <property type="protein sequence ID" value="ABI76050.1"/>
    <property type="molecule type" value="Genomic_DNA"/>
</dbReference>
<dbReference type="RefSeq" id="WP_011647061.1">
    <property type="nucleotide sequence ID" value="NC_008358.1"/>
</dbReference>
<dbReference type="SMR" id="Q0C0I1"/>
<dbReference type="STRING" id="228405.HNE_2064"/>
<dbReference type="KEGG" id="hne:HNE_2064"/>
<dbReference type="eggNOG" id="COG0061">
    <property type="taxonomic scope" value="Bacteria"/>
</dbReference>
<dbReference type="HOGENOM" id="CLU_073319_0_0_5"/>
<dbReference type="Proteomes" id="UP000001959">
    <property type="component" value="Chromosome"/>
</dbReference>
<dbReference type="GO" id="GO:0005737">
    <property type="term" value="C:cytoplasm"/>
    <property type="evidence" value="ECO:0007669"/>
    <property type="project" value="UniProtKB-SubCell"/>
</dbReference>
<dbReference type="GO" id="GO:0005524">
    <property type="term" value="F:ATP binding"/>
    <property type="evidence" value="ECO:0007669"/>
    <property type="project" value="UniProtKB-KW"/>
</dbReference>
<dbReference type="GO" id="GO:0046872">
    <property type="term" value="F:metal ion binding"/>
    <property type="evidence" value="ECO:0007669"/>
    <property type="project" value="UniProtKB-UniRule"/>
</dbReference>
<dbReference type="GO" id="GO:0051287">
    <property type="term" value="F:NAD binding"/>
    <property type="evidence" value="ECO:0007669"/>
    <property type="project" value="UniProtKB-ARBA"/>
</dbReference>
<dbReference type="GO" id="GO:0003951">
    <property type="term" value="F:NAD+ kinase activity"/>
    <property type="evidence" value="ECO:0007669"/>
    <property type="project" value="UniProtKB-UniRule"/>
</dbReference>
<dbReference type="GO" id="GO:0019674">
    <property type="term" value="P:NAD metabolic process"/>
    <property type="evidence" value="ECO:0007669"/>
    <property type="project" value="InterPro"/>
</dbReference>
<dbReference type="GO" id="GO:0006741">
    <property type="term" value="P:NADP biosynthetic process"/>
    <property type="evidence" value="ECO:0007669"/>
    <property type="project" value="UniProtKB-UniRule"/>
</dbReference>
<dbReference type="Gene3D" id="3.40.50.10330">
    <property type="entry name" value="Probable inorganic polyphosphate/atp-NAD kinase, domain 1"/>
    <property type="match status" value="1"/>
</dbReference>
<dbReference type="Gene3D" id="2.60.200.30">
    <property type="entry name" value="Probable inorganic polyphosphate/atp-NAD kinase, domain 2"/>
    <property type="match status" value="1"/>
</dbReference>
<dbReference type="HAMAP" id="MF_00361">
    <property type="entry name" value="NAD_kinase"/>
    <property type="match status" value="1"/>
</dbReference>
<dbReference type="InterPro" id="IPR017438">
    <property type="entry name" value="ATP-NAD_kinase_N"/>
</dbReference>
<dbReference type="InterPro" id="IPR017437">
    <property type="entry name" value="ATP-NAD_kinase_PpnK-typ_C"/>
</dbReference>
<dbReference type="InterPro" id="IPR016064">
    <property type="entry name" value="NAD/diacylglycerol_kinase_sf"/>
</dbReference>
<dbReference type="InterPro" id="IPR002504">
    <property type="entry name" value="NADK"/>
</dbReference>
<dbReference type="NCBIfam" id="NF003406">
    <property type="entry name" value="PRK04761.1"/>
    <property type="match status" value="1"/>
</dbReference>
<dbReference type="PANTHER" id="PTHR20275">
    <property type="entry name" value="NAD KINASE"/>
    <property type="match status" value="1"/>
</dbReference>
<dbReference type="PANTHER" id="PTHR20275:SF0">
    <property type="entry name" value="NAD KINASE"/>
    <property type="match status" value="1"/>
</dbReference>
<dbReference type="Pfam" id="PF01513">
    <property type="entry name" value="NAD_kinase"/>
    <property type="match status" value="1"/>
</dbReference>
<dbReference type="Pfam" id="PF20143">
    <property type="entry name" value="NAD_kinase_C"/>
    <property type="match status" value="1"/>
</dbReference>
<dbReference type="SUPFAM" id="SSF111331">
    <property type="entry name" value="NAD kinase/diacylglycerol kinase-like"/>
    <property type="match status" value="1"/>
</dbReference>
<sequence length="255" mass="28133">MTPLRIAFYASKRPEAQQVLPQLRDKYGHYSEEEADVIVALGGDGAMLDTLRRRFDDGKPVYGMHLGTVGFLMNDFHADGLPERIEAAERATLSPLRMQATDLDGTVHRAMAINEISLLRQTAQSARLKIIVDGRVRMEELVCDGLMVATPAGSTAYNLSAHGPILPIGAKLLALTPVSAFRPRRWRGALLKAEARVDIEVVAPDRRPVSASADNEEVRNIAKVTVETDPARTLKVLFDPGHALDERILREQFAF</sequence>
<gene>
    <name evidence="1" type="primary">nadK</name>
    <name type="ordered locus">HNE_2064</name>
</gene>
<accession>Q0C0I1</accession>